<name>CMAT_CONPO</name>
<sequence>AFVKGSAQRVAHGY</sequence>
<organism>
    <name type="scientific">Conus planorbis</name>
    <name type="common">Planorbis cone</name>
    <dbReference type="NCBI Taxonomy" id="97183"/>
    <lineage>
        <taxon>Eukaryota</taxon>
        <taxon>Metazoa</taxon>
        <taxon>Spiralia</taxon>
        <taxon>Lophotrochozoa</taxon>
        <taxon>Mollusca</taxon>
        <taxon>Gastropoda</taxon>
        <taxon>Caenogastropoda</taxon>
        <taxon>Neogastropoda</taxon>
        <taxon>Conoidea</taxon>
        <taxon>Conidae</taxon>
        <taxon>Conus</taxon>
        <taxon>Strategoconus</taxon>
    </lineage>
</organism>
<comment type="function">
    <text>Is a potent and mollusk specific excitatory peptide. Most potent excitatory effect are observed on the buccal mass. It interacts with non-cholinergic receptors. As this peptide is a major component of the venom, it may play an important role in prey capture.</text>
</comment>
<comment type="subcellular location">
    <subcellularLocation>
        <location evidence="1">Secreted</location>
    </subcellularLocation>
</comment>
<comment type="tissue specificity">
    <text evidence="4">Expressed by the venom duct.</text>
</comment>
<comment type="mass spectrometry"/>
<comment type="miscellaneous">
    <text>The mature peptide does not contain cysteine residue.</text>
</comment>
<comment type="caution">
    <text evidence="3">The status of C.vitulinus is unclear.</text>
</comment>
<dbReference type="GO" id="GO:0005576">
    <property type="term" value="C:extracellular region"/>
    <property type="evidence" value="ECO:0007669"/>
    <property type="project" value="UniProtKB-SubCell"/>
</dbReference>
<dbReference type="GO" id="GO:0090729">
    <property type="term" value="F:toxin activity"/>
    <property type="evidence" value="ECO:0007669"/>
    <property type="project" value="UniProtKB-KW"/>
</dbReference>
<proteinExistence type="evidence at protein level"/>
<feature type="peptide" id="PRO_0000262691" description="Conomap-Vt" evidence="1">
    <location>
        <begin position="1"/>
        <end position="14"/>
    </location>
</feature>
<feature type="modified residue" description="D-phenylalanine" evidence="1">
    <location>
        <position position="2"/>
    </location>
</feature>
<feature type="modified residue" description="Tyrosine amide" evidence="1">
    <location>
        <position position="14"/>
    </location>
</feature>
<evidence type="ECO:0000269" key="1">
    <source>
    </source>
</evidence>
<evidence type="ECO:0000303" key="2">
    <source>
    </source>
</evidence>
<evidence type="ECO:0000305" key="3"/>
<evidence type="ECO:0000305" key="4">
    <source>
    </source>
</evidence>
<keyword id="KW-0027">Amidation</keyword>
<keyword id="KW-0208">D-amino acid</keyword>
<keyword id="KW-0903">Direct protein sequencing</keyword>
<keyword id="KW-0528">Neurotoxin</keyword>
<keyword id="KW-0964">Secreted</keyword>
<keyword id="KW-0800">Toxin</keyword>
<reference key="1">
    <citation type="journal article" date="2006" name="FEBS Lett.">
        <title>Isolation and characterisation of conomap-Vt, a D-amino acid containing excitatory peptide from the venom of a vermivorous cone snail.</title>
        <authorList>
            <person name="Dutertre S."/>
            <person name="Lumsden N.G."/>
            <person name="Alewood P.F."/>
            <person name="Lewis R.J."/>
        </authorList>
    </citation>
    <scope>PROTEIN SEQUENCE</scope>
    <scope>SYNTHESIS</scope>
    <scope>D-AMINO ACID AT PHE-2</scope>
    <scope>AMIDATION AT TYR-14</scope>
    <scope>MASS SPECTROMETRY</scope>
    <scope>SUBCELLULAR LOCATION</scope>
    <source>
        <strain>C.vitulinus</strain>
        <tissue>Venom</tissue>
    </source>
</reference>
<accession>P0C260</accession>
<protein>
    <recommendedName>
        <fullName evidence="2">Conomap-Vt</fullName>
        <shortName evidence="2">Conp-Vt</shortName>
    </recommendedName>
</protein>